<keyword id="KW-0067">ATP-binding</keyword>
<keyword id="KW-0173">Coenzyme A biosynthesis</keyword>
<keyword id="KW-0963">Cytoplasm</keyword>
<keyword id="KW-0460">Magnesium</keyword>
<keyword id="KW-0547">Nucleotide-binding</keyword>
<keyword id="KW-0548">Nucleotidyltransferase</keyword>
<keyword id="KW-0808">Transferase</keyword>
<sequence length="159" mass="17967">MKPIAIYPGTFDPLTNGHVDIIERALPLFNKIIVACAPTSRKDPHLKLEERVNLIADVLTDERVEVLPLTGLLVDFAKTHQANFILRGLRAVSDFDYEFQLAHMNYQLSPEIETIFLPAREGYSYVSGTMVREIVTLGGDVSPFVPPLVARHLQKRREK</sequence>
<evidence type="ECO:0000255" key="1">
    <source>
        <dbReference type="HAMAP-Rule" id="MF_00151"/>
    </source>
</evidence>
<name>COAD_COXB1</name>
<dbReference type="EC" id="2.7.7.3" evidence="1"/>
<dbReference type="EMBL" id="CP001020">
    <property type="protein sequence ID" value="ACJ19765.1"/>
    <property type="molecule type" value="Genomic_DNA"/>
</dbReference>
<dbReference type="RefSeq" id="WP_005771452.1">
    <property type="nucleotide sequence ID" value="NC_011528.1"/>
</dbReference>
<dbReference type="SMR" id="B6J5S3"/>
<dbReference type="KEGG" id="cbc:CbuK_0484"/>
<dbReference type="HOGENOM" id="CLU_100149_0_1_6"/>
<dbReference type="UniPathway" id="UPA00241">
    <property type="reaction ID" value="UER00355"/>
</dbReference>
<dbReference type="GO" id="GO:0005737">
    <property type="term" value="C:cytoplasm"/>
    <property type="evidence" value="ECO:0007669"/>
    <property type="project" value="UniProtKB-SubCell"/>
</dbReference>
<dbReference type="GO" id="GO:0005524">
    <property type="term" value="F:ATP binding"/>
    <property type="evidence" value="ECO:0007669"/>
    <property type="project" value="UniProtKB-KW"/>
</dbReference>
<dbReference type="GO" id="GO:0004595">
    <property type="term" value="F:pantetheine-phosphate adenylyltransferase activity"/>
    <property type="evidence" value="ECO:0007669"/>
    <property type="project" value="UniProtKB-UniRule"/>
</dbReference>
<dbReference type="GO" id="GO:0015937">
    <property type="term" value="P:coenzyme A biosynthetic process"/>
    <property type="evidence" value="ECO:0007669"/>
    <property type="project" value="UniProtKB-UniRule"/>
</dbReference>
<dbReference type="CDD" id="cd02163">
    <property type="entry name" value="PPAT"/>
    <property type="match status" value="1"/>
</dbReference>
<dbReference type="Gene3D" id="3.40.50.620">
    <property type="entry name" value="HUPs"/>
    <property type="match status" value="1"/>
</dbReference>
<dbReference type="HAMAP" id="MF_00151">
    <property type="entry name" value="PPAT_bact"/>
    <property type="match status" value="1"/>
</dbReference>
<dbReference type="InterPro" id="IPR004821">
    <property type="entry name" value="Cyt_trans-like"/>
</dbReference>
<dbReference type="InterPro" id="IPR001980">
    <property type="entry name" value="PPAT"/>
</dbReference>
<dbReference type="InterPro" id="IPR014729">
    <property type="entry name" value="Rossmann-like_a/b/a_fold"/>
</dbReference>
<dbReference type="NCBIfam" id="TIGR01510">
    <property type="entry name" value="coaD_prev_kdtB"/>
    <property type="match status" value="1"/>
</dbReference>
<dbReference type="NCBIfam" id="TIGR00125">
    <property type="entry name" value="cyt_tran_rel"/>
    <property type="match status" value="1"/>
</dbReference>
<dbReference type="PANTHER" id="PTHR21342">
    <property type="entry name" value="PHOSPHOPANTETHEINE ADENYLYLTRANSFERASE"/>
    <property type="match status" value="1"/>
</dbReference>
<dbReference type="PANTHER" id="PTHR21342:SF1">
    <property type="entry name" value="PHOSPHOPANTETHEINE ADENYLYLTRANSFERASE"/>
    <property type="match status" value="1"/>
</dbReference>
<dbReference type="Pfam" id="PF01467">
    <property type="entry name" value="CTP_transf_like"/>
    <property type="match status" value="1"/>
</dbReference>
<dbReference type="PRINTS" id="PR01020">
    <property type="entry name" value="LPSBIOSNTHSS"/>
</dbReference>
<dbReference type="SUPFAM" id="SSF52374">
    <property type="entry name" value="Nucleotidylyl transferase"/>
    <property type="match status" value="1"/>
</dbReference>
<feature type="chain" id="PRO_1000096783" description="Phosphopantetheine adenylyltransferase">
    <location>
        <begin position="1"/>
        <end position="159"/>
    </location>
</feature>
<feature type="binding site" evidence="1">
    <location>
        <begin position="10"/>
        <end position="11"/>
    </location>
    <ligand>
        <name>ATP</name>
        <dbReference type="ChEBI" id="CHEBI:30616"/>
    </ligand>
</feature>
<feature type="binding site" evidence="1">
    <location>
        <position position="10"/>
    </location>
    <ligand>
        <name>substrate</name>
    </ligand>
</feature>
<feature type="binding site" evidence="1">
    <location>
        <position position="18"/>
    </location>
    <ligand>
        <name>ATP</name>
        <dbReference type="ChEBI" id="CHEBI:30616"/>
    </ligand>
</feature>
<feature type="binding site" evidence="1">
    <location>
        <position position="42"/>
    </location>
    <ligand>
        <name>substrate</name>
    </ligand>
</feature>
<feature type="binding site" evidence="1">
    <location>
        <position position="73"/>
    </location>
    <ligand>
        <name>substrate</name>
    </ligand>
</feature>
<feature type="binding site" evidence="1">
    <location>
        <position position="87"/>
    </location>
    <ligand>
        <name>substrate</name>
    </ligand>
</feature>
<feature type="binding site" evidence="1">
    <location>
        <begin position="88"/>
        <end position="90"/>
    </location>
    <ligand>
        <name>ATP</name>
        <dbReference type="ChEBI" id="CHEBI:30616"/>
    </ligand>
</feature>
<feature type="binding site" evidence="1">
    <location>
        <position position="98"/>
    </location>
    <ligand>
        <name>ATP</name>
        <dbReference type="ChEBI" id="CHEBI:30616"/>
    </ligand>
</feature>
<feature type="binding site" evidence="1">
    <location>
        <begin position="123"/>
        <end position="129"/>
    </location>
    <ligand>
        <name>ATP</name>
        <dbReference type="ChEBI" id="CHEBI:30616"/>
    </ligand>
</feature>
<feature type="site" description="Transition state stabilizer" evidence="1">
    <location>
        <position position="18"/>
    </location>
</feature>
<comment type="function">
    <text evidence="1">Reversibly transfers an adenylyl group from ATP to 4'-phosphopantetheine, yielding dephospho-CoA (dPCoA) and pyrophosphate.</text>
</comment>
<comment type="catalytic activity">
    <reaction evidence="1">
        <text>(R)-4'-phosphopantetheine + ATP + H(+) = 3'-dephospho-CoA + diphosphate</text>
        <dbReference type="Rhea" id="RHEA:19801"/>
        <dbReference type="ChEBI" id="CHEBI:15378"/>
        <dbReference type="ChEBI" id="CHEBI:30616"/>
        <dbReference type="ChEBI" id="CHEBI:33019"/>
        <dbReference type="ChEBI" id="CHEBI:57328"/>
        <dbReference type="ChEBI" id="CHEBI:61723"/>
        <dbReference type="EC" id="2.7.7.3"/>
    </reaction>
</comment>
<comment type="cofactor">
    <cofactor evidence="1">
        <name>Mg(2+)</name>
        <dbReference type="ChEBI" id="CHEBI:18420"/>
    </cofactor>
</comment>
<comment type="pathway">
    <text evidence="1">Cofactor biosynthesis; coenzyme A biosynthesis; CoA from (R)-pantothenate: step 4/5.</text>
</comment>
<comment type="subunit">
    <text evidence="1">Homohexamer.</text>
</comment>
<comment type="subcellular location">
    <subcellularLocation>
        <location evidence="1">Cytoplasm</location>
    </subcellularLocation>
</comment>
<comment type="similarity">
    <text evidence="1">Belongs to the bacterial CoaD family.</text>
</comment>
<gene>
    <name evidence="1" type="primary">coaD</name>
    <name type="ordered locus">CbuK_0484</name>
</gene>
<organism>
    <name type="scientific">Coxiella burnetii (strain CbuK_Q154)</name>
    <name type="common">Coxiella burnetii (strain Q154)</name>
    <dbReference type="NCBI Taxonomy" id="434924"/>
    <lineage>
        <taxon>Bacteria</taxon>
        <taxon>Pseudomonadati</taxon>
        <taxon>Pseudomonadota</taxon>
        <taxon>Gammaproteobacteria</taxon>
        <taxon>Legionellales</taxon>
        <taxon>Coxiellaceae</taxon>
        <taxon>Coxiella</taxon>
    </lineage>
</organism>
<protein>
    <recommendedName>
        <fullName evidence="1">Phosphopantetheine adenylyltransferase</fullName>
        <ecNumber evidence="1">2.7.7.3</ecNumber>
    </recommendedName>
    <alternativeName>
        <fullName evidence="1">Dephospho-CoA pyrophosphorylase</fullName>
    </alternativeName>
    <alternativeName>
        <fullName evidence="1">Pantetheine-phosphate adenylyltransferase</fullName>
        <shortName evidence="1">PPAT</shortName>
    </alternativeName>
</protein>
<reference key="1">
    <citation type="journal article" date="2009" name="Infect. Immun.">
        <title>Comparative genomics reveal extensive transposon-mediated genomic plasticity and diversity among potential effector proteins within the genus Coxiella.</title>
        <authorList>
            <person name="Beare P.A."/>
            <person name="Unsworth N."/>
            <person name="Andoh M."/>
            <person name="Voth D.E."/>
            <person name="Omsland A."/>
            <person name="Gilk S.D."/>
            <person name="Williams K.P."/>
            <person name="Sobral B.W."/>
            <person name="Kupko J.J. III"/>
            <person name="Porcella S.F."/>
            <person name="Samuel J.E."/>
            <person name="Heinzen R.A."/>
        </authorList>
    </citation>
    <scope>NUCLEOTIDE SEQUENCE [LARGE SCALE GENOMIC DNA]</scope>
    <source>
        <strain>CbuK_Q154</strain>
    </source>
</reference>
<accession>B6J5S3</accession>
<proteinExistence type="inferred from homology"/>